<sequence>MEFTHLNESGRARMVDVGGKDDTNREATARACIKMNRETISMIRDGQMKKGDVLSVAQVGGIMGAKRTSDIIPMCHNIFISGVDIEFKLHEEEIEISAVAKTRGKTGIEMEALTAVSVAALTIYDMCKAVDKGMVISDIMLIKKTGGKSGDYERESI</sequence>
<dbReference type="EC" id="4.6.1.17" evidence="1"/>
<dbReference type="EMBL" id="AJ291988">
    <property type="protein sequence ID" value="CAC40788.2"/>
    <property type="molecule type" value="Genomic_DNA"/>
</dbReference>
<dbReference type="SMR" id="Q93KD0"/>
<dbReference type="UniPathway" id="UPA00344"/>
<dbReference type="GO" id="GO:0061799">
    <property type="term" value="F:cyclic pyranopterin monophosphate synthase activity"/>
    <property type="evidence" value="ECO:0007669"/>
    <property type="project" value="UniProtKB-UniRule"/>
</dbReference>
<dbReference type="GO" id="GO:0006777">
    <property type="term" value="P:Mo-molybdopterin cofactor biosynthetic process"/>
    <property type="evidence" value="ECO:0007669"/>
    <property type="project" value="UniProtKB-UniRule"/>
</dbReference>
<dbReference type="CDD" id="cd01420">
    <property type="entry name" value="MoaC_PE"/>
    <property type="match status" value="1"/>
</dbReference>
<dbReference type="Gene3D" id="3.30.70.640">
    <property type="entry name" value="Molybdopterin cofactor biosynthesis C (MoaC) domain"/>
    <property type="match status" value="1"/>
</dbReference>
<dbReference type="HAMAP" id="MF_01224_B">
    <property type="entry name" value="MoaC_B"/>
    <property type="match status" value="1"/>
</dbReference>
<dbReference type="InterPro" id="IPR023045">
    <property type="entry name" value="MoaC"/>
</dbReference>
<dbReference type="InterPro" id="IPR047594">
    <property type="entry name" value="MoaC_bact/euk"/>
</dbReference>
<dbReference type="InterPro" id="IPR036522">
    <property type="entry name" value="MoaC_sf"/>
</dbReference>
<dbReference type="InterPro" id="IPR050105">
    <property type="entry name" value="MoCo_biosynth_MoaA/MoaC"/>
</dbReference>
<dbReference type="InterPro" id="IPR002820">
    <property type="entry name" value="Mopterin_CF_biosynth-C_dom"/>
</dbReference>
<dbReference type="NCBIfam" id="TIGR00581">
    <property type="entry name" value="moaC"/>
    <property type="match status" value="1"/>
</dbReference>
<dbReference type="NCBIfam" id="NF006870">
    <property type="entry name" value="PRK09364.1"/>
    <property type="match status" value="1"/>
</dbReference>
<dbReference type="PANTHER" id="PTHR22960">
    <property type="entry name" value="MOLYBDOPTERIN COFACTOR SYNTHESIS PROTEIN A"/>
    <property type="match status" value="1"/>
</dbReference>
<dbReference type="Pfam" id="PF01967">
    <property type="entry name" value="MoaC"/>
    <property type="match status" value="1"/>
</dbReference>
<dbReference type="SUPFAM" id="SSF55040">
    <property type="entry name" value="Molybdenum cofactor biosynthesis protein C, MoaC"/>
    <property type="match status" value="1"/>
</dbReference>
<reference key="1">
    <citation type="submission" date="2004-08" db="EMBL/GenBank/DDBJ databases">
        <authorList>
            <person name="Makdessi K."/>
        </authorList>
    </citation>
    <scope>NUCLEOTIDE SEQUENCE [GENOMIC DNA]</scope>
</reference>
<reference key="2">
    <citation type="journal article" date="2001" name="J. Biol. Chem.">
        <title>Tungstate uptake by a highly specific ABC transporter in Eubacterium acidaminophilum.</title>
        <authorList>
            <person name="Makdessi K."/>
            <person name="Andreesen J.R."/>
            <person name="Pich A."/>
        </authorList>
    </citation>
    <scope>NUCLEOTIDE SEQUENCE [GENOMIC DNA] OF 1-87</scope>
    <source>
        <strain>ATCC 49065 / DSM 3953 / al-2</strain>
    </source>
</reference>
<comment type="function">
    <text evidence="1">Catalyzes the conversion of (8S)-3',8-cyclo-7,8-dihydroguanosine 5'-triphosphate to cyclic pyranopterin monophosphate (cPMP).</text>
</comment>
<comment type="catalytic activity">
    <reaction evidence="1">
        <text>(8S)-3',8-cyclo-7,8-dihydroguanosine 5'-triphosphate = cyclic pyranopterin phosphate + diphosphate</text>
        <dbReference type="Rhea" id="RHEA:49580"/>
        <dbReference type="ChEBI" id="CHEBI:33019"/>
        <dbReference type="ChEBI" id="CHEBI:59648"/>
        <dbReference type="ChEBI" id="CHEBI:131766"/>
        <dbReference type="EC" id="4.6.1.17"/>
    </reaction>
</comment>
<comment type="pathway">
    <text evidence="1">Cofactor biosynthesis; molybdopterin biosynthesis.</text>
</comment>
<comment type="subunit">
    <text evidence="1">Homohexamer; trimer of dimers.</text>
</comment>
<comment type="similarity">
    <text evidence="1">Belongs to the MoaC family.</text>
</comment>
<gene>
    <name evidence="1" type="primary">moaC</name>
</gene>
<name>MOAC_PEPAC</name>
<evidence type="ECO:0000255" key="1">
    <source>
        <dbReference type="HAMAP-Rule" id="MF_01224"/>
    </source>
</evidence>
<organism>
    <name type="scientific">Peptoclostridium acidaminophilum</name>
    <name type="common">Eubacterium acidaminophilum</name>
    <dbReference type="NCBI Taxonomy" id="1731"/>
    <lineage>
        <taxon>Bacteria</taxon>
        <taxon>Bacillati</taxon>
        <taxon>Bacillota</taxon>
        <taxon>Clostridia</taxon>
        <taxon>Peptostreptococcales</taxon>
        <taxon>Peptoclostridiaceae</taxon>
        <taxon>Peptoclostridium</taxon>
    </lineage>
</organism>
<accession>Q93KD0</accession>
<proteinExistence type="inferred from homology"/>
<feature type="chain" id="PRO_0000097801" description="Cyclic pyranopterin monophosphate synthase">
    <location>
        <begin position="1"/>
        <end position="157"/>
    </location>
</feature>
<feature type="active site" evidence="1">
    <location>
        <position position="125"/>
    </location>
</feature>
<feature type="binding site" evidence="1">
    <location>
        <begin position="74"/>
        <end position="76"/>
    </location>
    <ligand>
        <name>substrate</name>
    </ligand>
</feature>
<feature type="binding site" evidence="1">
    <location>
        <begin position="110"/>
        <end position="111"/>
    </location>
    <ligand>
        <name>substrate</name>
    </ligand>
</feature>
<keyword id="KW-0456">Lyase</keyword>
<keyword id="KW-0501">Molybdenum cofactor biosynthesis</keyword>
<protein>
    <recommendedName>
        <fullName evidence="1">Cyclic pyranopterin monophosphate synthase</fullName>
        <ecNumber evidence="1">4.6.1.17</ecNumber>
    </recommendedName>
    <alternativeName>
        <fullName evidence="1">Molybdenum cofactor biosynthesis protein C</fullName>
    </alternativeName>
</protein>